<feature type="chain" id="PRO_0000438258" description="Probable capsid maturation protease">
    <location>
        <begin position="1"/>
        <end position="178"/>
    </location>
</feature>
<feature type="coiled-coil region" evidence="2">
    <location>
        <begin position="146"/>
        <end position="178"/>
    </location>
</feature>
<keyword id="KW-0175">Coiled coil</keyword>
<keyword id="KW-0378">Hydrolase</keyword>
<keyword id="KW-0645">Protease</keyword>
<keyword id="KW-1185">Reference proteome</keyword>
<keyword id="KW-0118">Viral capsid assembly</keyword>
<keyword id="KW-1273">Viral capsid maturation</keyword>
<keyword id="KW-1188">Viral release from host cell</keyword>
<dbReference type="EC" id="3.4.-.-"/>
<dbReference type="EMBL" id="AF011378">
    <property type="protein sequence ID" value="AAB70044.1"/>
    <property type="molecule type" value="Genomic_DNA"/>
</dbReference>
<dbReference type="RefSeq" id="NP_044951.1">
    <property type="nucleotide sequence ID" value="NC_001835.1"/>
</dbReference>
<dbReference type="SMR" id="O21873"/>
<dbReference type="GeneID" id="1261303"/>
<dbReference type="KEGG" id="vg:1261303"/>
<dbReference type="Proteomes" id="UP000000839">
    <property type="component" value="Genome"/>
</dbReference>
<dbReference type="GO" id="GO:0008233">
    <property type="term" value="F:peptidase activity"/>
    <property type="evidence" value="ECO:0007669"/>
    <property type="project" value="UniProtKB-KW"/>
</dbReference>
<dbReference type="GO" id="GO:0006508">
    <property type="term" value="P:proteolysis"/>
    <property type="evidence" value="ECO:0007669"/>
    <property type="project" value="UniProtKB-KW"/>
</dbReference>
<dbReference type="GO" id="GO:0046797">
    <property type="term" value="P:viral procapsid maturation"/>
    <property type="evidence" value="ECO:0007669"/>
    <property type="project" value="UniProtKB-KW"/>
</dbReference>
<dbReference type="InterPro" id="IPR054613">
    <property type="entry name" value="Peptidase_S78_dom"/>
</dbReference>
<dbReference type="Pfam" id="PF04586">
    <property type="entry name" value="Peptidase_S78"/>
    <property type="match status" value="1"/>
</dbReference>
<name>PRO_BPLSK</name>
<evidence type="ECO:0000250" key="1">
    <source>
        <dbReference type="UniProtKB" id="D3WAC4"/>
    </source>
</evidence>
<evidence type="ECO:0000255" key="2"/>
<evidence type="ECO:0000305" key="3"/>
<proteinExistence type="inferred from homology"/>
<accession>O21873</accession>
<organism>
    <name type="scientific">Lactococcus phage SK1</name>
    <name type="common">Lactococcus lactis bacteriophage SK1</name>
    <dbReference type="NCBI Taxonomy" id="2905675"/>
    <lineage>
        <taxon>Viruses</taxon>
        <taxon>Duplodnaviria</taxon>
        <taxon>Heunggongvirae</taxon>
        <taxon>Uroviricota</taxon>
        <taxon>Caudoviricetes</taxon>
        <taxon>Skunavirus</taxon>
        <taxon>Skunavirus sk1</taxon>
    </lineage>
</organism>
<organismHost>
    <name type="scientific">Lactococcus lactis</name>
    <dbReference type="NCBI Taxonomy" id="1358"/>
</organismHost>
<protein>
    <recommendedName>
        <fullName>Probable capsid maturation protease</fullName>
        <ecNumber>3.4.-.-</ecNumber>
    </recommendedName>
    <alternativeName>
        <fullName>Gene product 5</fullName>
        <shortName>gp5</shortName>
    </alternativeName>
</protein>
<sequence length="178" mass="19947">MKLITNSAEIKVTENEDGSKSFQGIGSEVGVENRNGIVLTPNCIEFARERYPLLYEHGAGSSEVIGDAKVYYDLASNKYLTDFTLYDNAPNINKAVENGAFDSLSIAYYITDYEFNENDALVVNKAQFKEISLVSVPADPNAKFIQNALGEELTEERNKIIESRNALKEIEDIKKKYE</sequence>
<reference key="1">
    <citation type="journal article" date="1997" name="Mol. Microbiol.">
        <title>Analysis of the DNA sequence, gene expression, origin of replication and modular structure of the Lactococcus lactis lytic bacteriophage sk1.</title>
        <authorList>
            <person name="Chandry P.S."/>
            <person name="Moore S.C."/>
            <person name="Boyce J.D."/>
            <person name="Davidson B.E."/>
            <person name="Hillier A.J."/>
        </authorList>
    </citation>
    <scope>NUCLEOTIDE SEQUENCE [LARGE SCALE GENOMIC DNA]</scope>
</reference>
<comment type="function">
    <text evidence="1">Probable capsid maturation protease.</text>
</comment>
<comment type="similarity">
    <text evidence="3">Belongs to the skunalikevirus capsid maturation protease family.</text>
</comment>